<name>OTC_PSYA2</name>
<feature type="chain" id="PRO_1000065111" description="Ornithine carbamoyltransferase">
    <location>
        <begin position="1"/>
        <end position="307"/>
    </location>
</feature>
<feature type="binding site" evidence="2">
    <location>
        <begin position="53"/>
        <end position="56"/>
    </location>
    <ligand>
        <name>carbamoyl phosphate</name>
        <dbReference type="ChEBI" id="CHEBI:58228"/>
    </ligand>
</feature>
<feature type="binding site" evidence="2">
    <location>
        <position position="80"/>
    </location>
    <ligand>
        <name>carbamoyl phosphate</name>
        <dbReference type="ChEBI" id="CHEBI:58228"/>
    </ligand>
</feature>
<feature type="binding site" evidence="2">
    <location>
        <position position="104"/>
    </location>
    <ligand>
        <name>carbamoyl phosphate</name>
        <dbReference type="ChEBI" id="CHEBI:58228"/>
    </ligand>
</feature>
<feature type="binding site" evidence="2">
    <location>
        <begin position="131"/>
        <end position="134"/>
    </location>
    <ligand>
        <name>carbamoyl phosphate</name>
        <dbReference type="ChEBI" id="CHEBI:58228"/>
    </ligand>
</feature>
<feature type="binding site" evidence="2">
    <location>
        <position position="162"/>
    </location>
    <ligand>
        <name>L-ornithine</name>
        <dbReference type="ChEBI" id="CHEBI:46911"/>
    </ligand>
</feature>
<feature type="binding site" evidence="2">
    <location>
        <position position="219"/>
    </location>
    <ligand>
        <name>L-ornithine</name>
        <dbReference type="ChEBI" id="CHEBI:46911"/>
    </ligand>
</feature>
<feature type="binding site" evidence="2">
    <location>
        <begin position="223"/>
        <end position="224"/>
    </location>
    <ligand>
        <name>L-ornithine</name>
        <dbReference type="ChEBI" id="CHEBI:46911"/>
    </ligand>
</feature>
<feature type="binding site" evidence="2">
    <location>
        <begin position="259"/>
        <end position="260"/>
    </location>
    <ligand>
        <name>carbamoyl phosphate</name>
        <dbReference type="ChEBI" id="CHEBI:58228"/>
    </ligand>
</feature>
<feature type="binding site" evidence="2">
    <location>
        <position position="287"/>
    </location>
    <ligand>
        <name>carbamoyl phosphate</name>
        <dbReference type="ChEBI" id="CHEBI:58228"/>
    </ligand>
</feature>
<gene>
    <name evidence="2" type="primary">argF</name>
    <name type="ordered locus">Psyc_0957</name>
</gene>
<keyword id="KW-0028">Amino-acid biosynthesis</keyword>
<keyword id="KW-0055">Arginine biosynthesis</keyword>
<keyword id="KW-0963">Cytoplasm</keyword>
<keyword id="KW-1185">Reference proteome</keyword>
<keyword id="KW-0808">Transferase</keyword>
<accession>Q4FT48</accession>
<protein>
    <recommendedName>
        <fullName evidence="2">Ornithine carbamoyltransferase</fullName>
        <shortName evidence="2">OTCase</shortName>
        <ecNumber evidence="2">2.1.3.3</ecNumber>
    </recommendedName>
</protein>
<reference key="1">
    <citation type="journal article" date="2010" name="Appl. Environ. Microbiol.">
        <title>The genome sequence of Psychrobacter arcticus 273-4, a psychroactive Siberian permafrost bacterium, reveals mechanisms for adaptation to low-temperature growth.</title>
        <authorList>
            <person name="Ayala-del-Rio H.L."/>
            <person name="Chain P.S."/>
            <person name="Grzymski J.J."/>
            <person name="Ponder M.A."/>
            <person name="Ivanova N."/>
            <person name="Bergholz P.W."/>
            <person name="Di Bartolo G."/>
            <person name="Hauser L."/>
            <person name="Land M."/>
            <person name="Bakermans C."/>
            <person name="Rodrigues D."/>
            <person name="Klappenbach J."/>
            <person name="Zarka D."/>
            <person name="Larimer F."/>
            <person name="Richardson P."/>
            <person name="Murray A."/>
            <person name="Thomashow M."/>
            <person name="Tiedje J.M."/>
        </authorList>
    </citation>
    <scope>NUCLEOTIDE SEQUENCE [LARGE SCALE GENOMIC DNA]</scope>
    <source>
        <strain>DSM 17307 / VKM B-2377 / 273-4</strain>
    </source>
</reference>
<comment type="function">
    <text evidence="1">Reversibly catalyzes the transfer of the carbamoyl group from carbamoyl phosphate (CP) to the N(epsilon) atom of ornithine (ORN) to produce L-citrulline.</text>
</comment>
<comment type="catalytic activity">
    <reaction evidence="2">
        <text>carbamoyl phosphate + L-ornithine = L-citrulline + phosphate + H(+)</text>
        <dbReference type="Rhea" id="RHEA:19513"/>
        <dbReference type="ChEBI" id="CHEBI:15378"/>
        <dbReference type="ChEBI" id="CHEBI:43474"/>
        <dbReference type="ChEBI" id="CHEBI:46911"/>
        <dbReference type="ChEBI" id="CHEBI:57743"/>
        <dbReference type="ChEBI" id="CHEBI:58228"/>
        <dbReference type="EC" id="2.1.3.3"/>
    </reaction>
</comment>
<comment type="pathway">
    <text evidence="2">Amino-acid biosynthesis; L-arginine biosynthesis; L-arginine from L-ornithine and carbamoyl phosphate: step 1/3.</text>
</comment>
<comment type="subcellular location">
    <subcellularLocation>
        <location evidence="2">Cytoplasm</location>
    </subcellularLocation>
</comment>
<comment type="similarity">
    <text evidence="2">Belongs to the aspartate/ornithine carbamoyltransferase superfamily. OTCase family.</text>
</comment>
<organism>
    <name type="scientific">Psychrobacter arcticus (strain DSM 17307 / VKM B-2377 / 273-4)</name>
    <dbReference type="NCBI Taxonomy" id="259536"/>
    <lineage>
        <taxon>Bacteria</taxon>
        <taxon>Pseudomonadati</taxon>
        <taxon>Pseudomonadota</taxon>
        <taxon>Gammaproteobacteria</taxon>
        <taxon>Moraxellales</taxon>
        <taxon>Moraxellaceae</taxon>
        <taxon>Psychrobacter</taxon>
    </lineage>
</organism>
<evidence type="ECO:0000250" key="1"/>
<evidence type="ECO:0000255" key="2">
    <source>
        <dbReference type="HAMAP-Rule" id="MF_01109"/>
    </source>
</evidence>
<dbReference type="EC" id="2.1.3.3" evidence="2"/>
<dbReference type="EMBL" id="CP000082">
    <property type="protein sequence ID" value="AAZ18810.1"/>
    <property type="molecule type" value="Genomic_DNA"/>
</dbReference>
<dbReference type="RefSeq" id="WP_011280232.1">
    <property type="nucleotide sequence ID" value="NC_007204.1"/>
</dbReference>
<dbReference type="SMR" id="Q4FT48"/>
<dbReference type="STRING" id="259536.Psyc_0957"/>
<dbReference type="KEGG" id="par:Psyc_0957"/>
<dbReference type="eggNOG" id="COG0078">
    <property type="taxonomic scope" value="Bacteria"/>
</dbReference>
<dbReference type="HOGENOM" id="CLU_043846_3_2_6"/>
<dbReference type="OrthoDB" id="9802587at2"/>
<dbReference type="UniPathway" id="UPA00068">
    <property type="reaction ID" value="UER00112"/>
</dbReference>
<dbReference type="Proteomes" id="UP000000546">
    <property type="component" value="Chromosome"/>
</dbReference>
<dbReference type="GO" id="GO:0005737">
    <property type="term" value="C:cytoplasm"/>
    <property type="evidence" value="ECO:0007669"/>
    <property type="project" value="UniProtKB-SubCell"/>
</dbReference>
<dbReference type="GO" id="GO:0016597">
    <property type="term" value="F:amino acid binding"/>
    <property type="evidence" value="ECO:0007669"/>
    <property type="project" value="InterPro"/>
</dbReference>
<dbReference type="GO" id="GO:0004585">
    <property type="term" value="F:ornithine carbamoyltransferase activity"/>
    <property type="evidence" value="ECO:0007669"/>
    <property type="project" value="UniProtKB-UniRule"/>
</dbReference>
<dbReference type="GO" id="GO:0042450">
    <property type="term" value="P:arginine biosynthetic process via ornithine"/>
    <property type="evidence" value="ECO:0007669"/>
    <property type="project" value="TreeGrafter"/>
</dbReference>
<dbReference type="GO" id="GO:0019240">
    <property type="term" value="P:citrulline biosynthetic process"/>
    <property type="evidence" value="ECO:0007669"/>
    <property type="project" value="TreeGrafter"/>
</dbReference>
<dbReference type="GO" id="GO:0006526">
    <property type="term" value="P:L-arginine biosynthetic process"/>
    <property type="evidence" value="ECO:0007669"/>
    <property type="project" value="UniProtKB-UniRule"/>
</dbReference>
<dbReference type="FunFam" id="3.40.50.1370:FF:000008">
    <property type="entry name" value="Ornithine carbamoyltransferase"/>
    <property type="match status" value="1"/>
</dbReference>
<dbReference type="Gene3D" id="3.40.50.1370">
    <property type="entry name" value="Aspartate/ornithine carbamoyltransferase"/>
    <property type="match status" value="2"/>
</dbReference>
<dbReference type="HAMAP" id="MF_01109">
    <property type="entry name" value="OTCase"/>
    <property type="match status" value="1"/>
</dbReference>
<dbReference type="InterPro" id="IPR006132">
    <property type="entry name" value="Asp/Orn_carbamoyltranf_P-bd"/>
</dbReference>
<dbReference type="InterPro" id="IPR006130">
    <property type="entry name" value="Asp/Orn_carbamoylTrfase"/>
</dbReference>
<dbReference type="InterPro" id="IPR036901">
    <property type="entry name" value="Asp/Orn_carbamoylTrfase_sf"/>
</dbReference>
<dbReference type="InterPro" id="IPR006131">
    <property type="entry name" value="Asp_carbamoyltransf_Asp/Orn-bd"/>
</dbReference>
<dbReference type="InterPro" id="IPR002292">
    <property type="entry name" value="Orn/put_carbamltrans"/>
</dbReference>
<dbReference type="InterPro" id="IPR024904">
    <property type="entry name" value="OTCase_ArgI"/>
</dbReference>
<dbReference type="NCBIfam" id="TIGR00658">
    <property type="entry name" value="orni_carb_tr"/>
    <property type="match status" value="1"/>
</dbReference>
<dbReference type="NCBIfam" id="NF001986">
    <property type="entry name" value="PRK00779.1"/>
    <property type="match status" value="1"/>
</dbReference>
<dbReference type="PANTHER" id="PTHR45753">
    <property type="entry name" value="ORNITHINE CARBAMOYLTRANSFERASE, MITOCHONDRIAL"/>
    <property type="match status" value="1"/>
</dbReference>
<dbReference type="PANTHER" id="PTHR45753:SF3">
    <property type="entry name" value="ORNITHINE TRANSCARBAMYLASE, MITOCHONDRIAL"/>
    <property type="match status" value="1"/>
</dbReference>
<dbReference type="Pfam" id="PF00185">
    <property type="entry name" value="OTCace"/>
    <property type="match status" value="1"/>
</dbReference>
<dbReference type="Pfam" id="PF02729">
    <property type="entry name" value="OTCace_N"/>
    <property type="match status" value="1"/>
</dbReference>
<dbReference type="PRINTS" id="PR00100">
    <property type="entry name" value="AOTCASE"/>
</dbReference>
<dbReference type="PRINTS" id="PR00102">
    <property type="entry name" value="OTCASE"/>
</dbReference>
<dbReference type="SUPFAM" id="SSF53671">
    <property type="entry name" value="Aspartate/ornithine carbamoyltransferase"/>
    <property type="match status" value="1"/>
</dbReference>
<dbReference type="PROSITE" id="PS00097">
    <property type="entry name" value="CARBAMOYLTRANSFERASE"/>
    <property type="match status" value="1"/>
</dbReference>
<proteinExistence type="inferred from homology"/>
<sequence length="307" mass="34784">MSLRHFLTLSDFTKQELENLIKRASELRKMQHAGEIYQPFVGRTLGMIFEKSSTRTRISFETGMGQFGGNAIFLSPNDTQLGRGEPLEDSARVISSMVDIIMIRTFGHEKVETFAKYSSVPIINALTDEFHPCQLLADMQTYYEHRGSIENKIVTWVGDGNNMCASFMQAAHQFGFELRVAAPYGFEPDSALMERFSHCVSLVENVQDAAKDSNLIVTDVWASMGQESEQNTRARRFAPYQVTPSLLDKADPEVVFMHCLPAHRGEEISHDMLDDPRSVVWDEAENRLHAQKALMEFLLKDKIKLPA</sequence>